<keyword id="KW-0028">Amino-acid biosynthesis</keyword>
<keyword id="KW-0055">Arginine biosynthesis</keyword>
<keyword id="KW-0963">Cytoplasm</keyword>
<keyword id="KW-0238">DNA-binding</keyword>
<keyword id="KW-0678">Repressor</keyword>
<keyword id="KW-0804">Transcription</keyword>
<keyword id="KW-0805">Transcription regulation</keyword>
<accession>B4UCN6</accession>
<proteinExistence type="inferred from homology"/>
<feature type="chain" id="PRO_1000097856" description="Arginine repressor">
    <location>
        <begin position="1"/>
        <end position="160"/>
    </location>
</feature>
<comment type="function">
    <text evidence="1">Regulates arginine biosynthesis genes.</text>
</comment>
<comment type="pathway">
    <text>Amino-acid biosynthesis; L-arginine biosynthesis [regulation].</text>
</comment>
<comment type="subcellular location">
    <subcellularLocation>
        <location evidence="1">Cytoplasm</location>
    </subcellularLocation>
</comment>
<comment type="similarity">
    <text evidence="1">Belongs to the ArgR family.</text>
</comment>
<organism>
    <name type="scientific">Anaeromyxobacter sp. (strain K)</name>
    <dbReference type="NCBI Taxonomy" id="447217"/>
    <lineage>
        <taxon>Bacteria</taxon>
        <taxon>Pseudomonadati</taxon>
        <taxon>Myxococcota</taxon>
        <taxon>Myxococcia</taxon>
        <taxon>Myxococcales</taxon>
        <taxon>Cystobacterineae</taxon>
        <taxon>Anaeromyxobacteraceae</taxon>
        <taxon>Anaeromyxobacter</taxon>
    </lineage>
</organism>
<name>ARGR_ANASK</name>
<protein>
    <recommendedName>
        <fullName evidence="1">Arginine repressor</fullName>
    </recommendedName>
</protein>
<sequence>MTSADRRRDAVARIIRARRIGTQEELLAALERAGFRATQATLSRDLARLGARRVSGPEGAVYELGADGADGGLAALRGLVSSIAANASMVVIRTHPGSAPAIARAIDLAQPPEVLGTIAGDDTIFVAPAGELRPRRLAARLAELLGTPSALAGDGGERTH</sequence>
<gene>
    <name evidence="1" type="primary">argR</name>
    <name type="ordered locus">AnaeK_0621</name>
</gene>
<evidence type="ECO:0000255" key="1">
    <source>
        <dbReference type="HAMAP-Rule" id="MF_00173"/>
    </source>
</evidence>
<reference key="1">
    <citation type="submission" date="2008-08" db="EMBL/GenBank/DDBJ databases">
        <title>Complete sequence of Anaeromyxobacter sp. K.</title>
        <authorList>
            <consortium name="US DOE Joint Genome Institute"/>
            <person name="Lucas S."/>
            <person name="Copeland A."/>
            <person name="Lapidus A."/>
            <person name="Glavina del Rio T."/>
            <person name="Dalin E."/>
            <person name="Tice H."/>
            <person name="Bruce D."/>
            <person name="Goodwin L."/>
            <person name="Pitluck S."/>
            <person name="Saunders E."/>
            <person name="Brettin T."/>
            <person name="Detter J.C."/>
            <person name="Han C."/>
            <person name="Larimer F."/>
            <person name="Land M."/>
            <person name="Hauser L."/>
            <person name="Kyrpides N."/>
            <person name="Ovchinnikiva G."/>
            <person name="Beliaev A."/>
        </authorList>
    </citation>
    <scope>NUCLEOTIDE SEQUENCE [LARGE SCALE GENOMIC DNA]</scope>
    <source>
        <strain>K</strain>
    </source>
</reference>
<dbReference type="EMBL" id="CP001131">
    <property type="protein sequence ID" value="ACG71860.1"/>
    <property type="molecule type" value="Genomic_DNA"/>
</dbReference>
<dbReference type="RefSeq" id="WP_012524692.1">
    <property type="nucleotide sequence ID" value="NC_011145.1"/>
</dbReference>
<dbReference type="SMR" id="B4UCN6"/>
<dbReference type="KEGG" id="ank:AnaeK_0621"/>
<dbReference type="HOGENOM" id="CLU_097103_1_1_7"/>
<dbReference type="OrthoDB" id="7060358at2"/>
<dbReference type="UniPathway" id="UPA00068"/>
<dbReference type="Proteomes" id="UP000001871">
    <property type="component" value="Chromosome"/>
</dbReference>
<dbReference type="GO" id="GO:0005737">
    <property type="term" value="C:cytoplasm"/>
    <property type="evidence" value="ECO:0007669"/>
    <property type="project" value="UniProtKB-SubCell"/>
</dbReference>
<dbReference type="GO" id="GO:0034618">
    <property type="term" value="F:arginine binding"/>
    <property type="evidence" value="ECO:0007669"/>
    <property type="project" value="InterPro"/>
</dbReference>
<dbReference type="GO" id="GO:0003677">
    <property type="term" value="F:DNA binding"/>
    <property type="evidence" value="ECO:0007669"/>
    <property type="project" value="UniProtKB-KW"/>
</dbReference>
<dbReference type="GO" id="GO:0003700">
    <property type="term" value="F:DNA-binding transcription factor activity"/>
    <property type="evidence" value="ECO:0007669"/>
    <property type="project" value="UniProtKB-UniRule"/>
</dbReference>
<dbReference type="GO" id="GO:0006526">
    <property type="term" value="P:L-arginine biosynthetic process"/>
    <property type="evidence" value="ECO:0007669"/>
    <property type="project" value="UniProtKB-UniPathway"/>
</dbReference>
<dbReference type="GO" id="GO:0051259">
    <property type="term" value="P:protein complex oligomerization"/>
    <property type="evidence" value="ECO:0007669"/>
    <property type="project" value="InterPro"/>
</dbReference>
<dbReference type="GO" id="GO:1900079">
    <property type="term" value="P:regulation of arginine biosynthetic process"/>
    <property type="evidence" value="ECO:0007669"/>
    <property type="project" value="UniProtKB-UniRule"/>
</dbReference>
<dbReference type="Gene3D" id="3.30.1360.40">
    <property type="match status" value="1"/>
</dbReference>
<dbReference type="Gene3D" id="1.10.10.10">
    <property type="entry name" value="Winged helix-like DNA-binding domain superfamily/Winged helix DNA-binding domain"/>
    <property type="match status" value="1"/>
</dbReference>
<dbReference type="HAMAP" id="MF_00173">
    <property type="entry name" value="Arg_repressor"/>
    <property type="match status" value="1"/>
</dbReference>
<dbReference type="InterPro" id="IPR001669">
    <property type="entry name" value="Arg_repress"/>
</dbReference>
<dbReference type="InterPro" id="IPR020899">
    <property type="entry name" value="Arg_repress_C"/>
</dbReference>
<dbReference type="InterPro" id="IPR036251">
    <property type="entry name" value="Arg_repress_C_sf"/>
</dbReference>
<dbReference type="InterPro" id="IPR020900">
    <property type="entry name" value="Arg_repress_DNA-bd"/>
</dbReference>
<dbReference type="InterPro" id="IPR036388">
    <property type="entry name" value="WH-like_DNA-bd_sf"/>
</dbReference>
<dbReference type="InterPro" id="IPR036390">
    <property type="entry name" value="WH_DNA-bd_sf"/>
</dbReference>
<dbReference type="PANTHER" id="PTHR34471">
    <property type="entry name" value="ARGININE REPRESSOR"/>
    <property type="match status" value="1"/>
</dbReference>
<dbReference type="PANTHER" id="PTHR34471:SF1">
    <property type="entry name" value="ARGININE REPRESSOR"/>
    <property type="match status" value="1"/>
</dbReference>
<dbReference type="Pfam" id="PF01316">
    <property type="entry name" value="Arg_repressor"/>
    <property type="match status" value="1"/>
</dbReference>
<dbReference type="Pfam" id="PF02863">
    <property type="entry name" value="Arg_repressor_C"/>
    <property type="match status" value="1"/>
</dbReference>
<dbReference type="PRINTS" id="PR01467">
    <property type="entry name" value="ARGREPRESSOR"/>
</dbReference>
<dbReference type="SUPFAM" id="SSF55252">
    <property type="entry name" value="C-terminal domain of arginine repressor"/>
    <property type="match status" value="1"/>
</dbReference>
<dbReference type="SUPFAM" id="SSF46785">
    <property type="entry name" value="Winged helix' DNA-binding domain"/>
    <property type="match status" value="1"/>
</dbReference>